<reference key="1">
    <citation type="journal article" date="2015" name="Genome Announc.">
        <title>Genome sequence of Aspergillus flavus NRRL 3357, a strain that causes aflatoxin contamination of food and feed.</title>
        <authorList>
            <person name="Nierman W.C."/>
            <person name="Yu J."/>
            <person name="Fedorova-Abrams N.D."/>
            <person name="Losada L."/>
            <person name="Cleveland T.E."/>
            <person name="Bhatnagar D."/>
            <person name="Bennett J.W."/>
            <person name="Dean R."/>
            <person name="Payne G.A."/>
        </authorList>
    </citation>
    <scope>NUCLEOTIDE SEQUENCE [LARGE SCALE GENOMIC DNA]</scope>
    <source>
        <strain>ATCC 200026 / FGSC A1120 / IAM 13836 / NRRL 3357 / JCM 12722 / SRRC 167</strain>
    </source>
</reference>
<dbReference type="EC" id="3.1.1.74" evidence="5 6"/>
<dbReference type="EMBL" id="EQ963472">
    <property type="protein sequence ID" value="EED56576.1"/>
    <property type="molecule type" value="Genomic_DNA"/>
</dbReference>
<dbReference type="RefSeq" id="XP_002372188.1">
    <property type="nucleotide sequence ID" value="XM_002372147.1"/>
</dbReference>
<dbReference type="SMR" id="B8MVS3"/>
<dbReference type="STRING" id="332952.B8MVS3"/>
<dbReference type="ESTHER" id="aspor-cutas">
    <property type="family name" value="Cutinase"/>
</dbReference>
<dbReference type="EnsemblFungi" id="EED56576">
    <property type="protein sequence ID" value="EED56576"/>
    <property type="gene ID" value="AFLA_072700"/>
</dbReference>
<dbReference type="VEuPathDB" id="FungiDB:AFLA_002808"/>
<dbReference type="eggNOG" id="ENOG502SI38">
    <property type="taxonomic scope" value="Eukaryota"/>
</dbReference>
<dbReference type="HOGENOM" id="CLU_040058_2_0_1"/>
<dbReference type="OMA" id="KIFCLPT"/>
<dbReference type="GO" id="GO:0005576">
    <property type="term" value="C:extracellular region"/>
    <property type="evidence" value="ECO:0007669"/>
    <property type="project" value="UniProtKB-SubCell"/>
</dbReference>
<dbReference type="GO" id="GO:0050525">
    <property type="term" value="F:cutinase activity"/>
    <property type="evidence" value="ECO:0000250"/>
    <property type="project" value="UniProtKB"/>
</dbReference>
<dbReference type="GO" id="GO:0016052">
    <property type="term" value="P:carbohydrate catabolic process"/>
    <property type="evidence" value="ECO:0007669"/>
    <property type="project" value="TreeGrafter"/>
</dbReference>
<dbReference type="FunFam" id="3.40.50.1820:FF:000235">
    <property type="entry name" value="Cutinase 1"/>
    <property type="match status" value="1"/>
</dbReference>
<dbReference type="Gene3D" id="3.40.50.1820">
    <property type="entry name" value="alpha/beta hydrolase"/>
    <property type="match status" value="1"/>
</dbReference>
<dbReference type="InterPro" id="IPR029058">
    <property type="entry name" value="AB_hydrolase_fold"/>
</dbReference>
<dbReference type="InterPro" id="IPR000675">
    <property type="entry name" value="Cutinase/axe"/>
</dbReference>
<dbReference type="InterPro" id="IPR043580">
    <property type="entry name" value="CUTINASE_1"/>
</dbReference>
<dbReference type="InterPro" id="IPR043579">
    <property type="entry name" value="CUTINASE_2"/>
</dbReference>
<dbReference type="InterPro" id="IPR011150">
    <property type="entry name" value="Cutinase_monf"/>
</dbReference>
<dbReference type="PANTHER" id="PTHR48250:SF3">
    <property type="entry name" value="CUTINASE 1-RELATED"/>
    <property type="match status" value="1"/>
</dbReference>
<dbReference type="PANTHER" id="PTHR48250">
    <property type="entry name" value="CUTINASE 2-RELATED"/>
    <property type="match status" value="1"/>
</dbReference>
<dbReference type="Pfam" id="PF01083">
    <property type="entry name" value="Cutinase"/>
    <property type="match status" value="1"/>
</dbReference>
<dbReference type="PRINTS" id="PR00129">
    <property type="entry name" value="CUTINASE"/>
</dbReference>
<dbReference type="SMART" id="SM01110">
    <property type="entry name" value="Cutinase"/>
    <property type="match status" value="1"/>
</dbReference>
<dbReference type="SUPFAM" id="SSF53474">
    <property type="entry name" value="alpha/beta-Hydrolases"/>
    <property type="match status" value="1"/>
</dbReference>
<dbReference type="PROSITE" id="PS00155">
    <property type="entry name" value="CUTINASE_1"/>
    <property type="match status" value="1"/>
</dbReference>
<dbReference type="PROSITE" id="PS00931">
    <property type="entry name" value="CUTINASE_2"/>
    <property type="match status" value="1"/>
</dbReference>
<organism>
    <name type="scientific">Aspergillus flavus (strain ATCC 200026 / FGSC A1120 / IAM 13836 / NRRL 3357 / JCM 12722 / SRRC 167)</name>
    <dbReference type="NCBI Taxonomy" id="332952"/>
    <lineage>
        <taxon>Eukaryota</taxon>
        <taxon>Fungi</taxon>
        <taxon>Dikarya</taxon>
        <taxon>Ascomycota</taxon>
        <taxon>Pezizomycotina</taxon>
        <taxon>Eurotiomycetes</taxon>
        <taxon>Eurotiomycetidae</taxon>
        <taxon>Eurotiales</taxon>
        <taxon>Aspergillaceae</taxon>
        <taxon>Aspergillus</taxon>
        <taxon>Aspergillus subgen. Circumdati</taxon>
    </lineage>
</organism>
<proteinExistence type="inferred from homology"/>
<name>CUTI1_ASPFN</name>
<comment type="function">
    <text evidence="1">Catalyzes the hydrolysis of complex carboxylic polyesters found in the cell wall of plants (By similarity). Degrades cutin, a macromolecule that forms the structure of the plant cuticle (By similarity).</text>
</comment>
<comment type="catalytic activity">
    <reaction evidence="5 6">
        <text>cutin + H2O = cutin monomers.</text>
        <dbReference type="EC" id="3.1.1.74"/>
    </reaction>
</comment>
<comment type="subcellular location">
    <subcellularLocation>
        <location evidence="2">Secreted</location>
    </subcellularLocation>
</comment>
<comment type="similarity">
    <text evidence="7">Belongs to the cutinase family.</text>
</comment>
<gene>
    <name type="ORF">AFLA_072700</name>
</gene>
<feature type="signal peptide" evidence="4">
    <location>
        <begin position="1"/>
        <end position="16"/>
    </location>
</feature>
<feature type="chain" id="PRO_0000395247" description="Probable cutinase 1">
    <location>
        <begin position="17"/>
        <end position="213"/>
    </location>
</feature>
<feature type="active site" description="Nucleophile" evidence="1">
    <location>
        <position position="126"/>
    </location>
</feature>
<feature type="active site" evidence="1">
    <location>
        <position position="181"/>
    </location>
</feature>
<feature type="active site" description="Proton donor/acceptor" evidence="1">
    <location>
        <position position="194"/>
    </location>
</feature>
<feature type="site" description="Transition state stabilizer" evidence="1">
    <location>
        <position position="48"/>
    </location>
</feature>
<feature type="site" description="Transition state stabilizer" evidence="1">
    <location>
        <position position="127"/>
    </location>
</feature>
<feature type="disulfide bond" evidence="3">
    <location>
        <begin position="37"/>
        <end position="115"/>
    </location>
</feature>
<feature type="disulfide bond" evidence="3">
    <location>
        <begin position="63"/>
        <end position="76"/>
    </location>
</feature>
<feature type="disulfide bond" evidence="3">
    <location>
        <begin position="177"/>
        <end position="184"/>
    </location>
</feature>
<keyword id="KW-1015">Disulfide bond</keyword>
<keyword id="KW-0378">Hydrolase</keyword>
<keyword id="KW-0964">Secreted</keyword>
<keyword id="KW-0719">Serine esterase</keyword>
<keyword id="KW-0732">Signal</keyword>
<protein>
    <recommendedName>
        <fullName>Probable cutinase 1</fullName>
        <ecNumber evidence="5 6">3.1.1.74</ecNumber>
    </recommendedName>
    <alternativeName>
        <fullName>Cutin hydrolase 1</fullName>
    </alternativeName>
</protein>
<evidence type="ECO:0000250" key="1">
    <source>
        <dbReference type="UniProtKB" id="P00590"/>
    </source>
</evidence>
<evidence type="ECO:0000250" key="2">
    <source>
        <dbReference type="UniProtKB" id="P11373"/>
    </source>
</evidence>
<evidence type="ECO:0000250" key="3">
    <source>
        <dbReference type="UniProtKB" id="P52956"/>
    </source>
</evidence>
<evidence type="ECO:0000255" key="4"/>
<evidence type="ECO:0000255" key="5">
    <source>
        <dbReference type="PROSITE-ProRule" id="PRU10108"/>
    </source>
</evidence>
<evidence type="ECO:0000255" key="6">
    <source>
        <dbReference type="PROSITE-ProRule" id="PRU10109"/>
    </source>
</evidence>
<evidence type="ECO:0000305" key="7"/>
<sequence>MHLRNIVIALAATAVASPVDLQDRQLTGGDELRDGPCKPITFIFARASTEPGLLGISTGPAVCNRLKLARSGDVACQGVGPRYTADLPSNALPEGTSQAAIAEAQGLFEQAVSKCPDTQIVAGGYSQGTAVMNGAIKRLSADVQDKIKGVVLFGYTRNAQERGQIANFPKDKVKVYCAVGDLVCLGTLIVAPPHFSYLSDTGDASDFLLSQLG</sequence>
<accession>B8MVS3</accession>